<sequence length="143" mass="15424">MSTKKVYSFLSQAFIFSAIMLISNIIATHLPIPMPSSVIGLVILFSLLCLKVIKLEQVESLGTALTGIIGFLFVPSGISVINSLGVMGQYFVQILTVIVVATVILLAVTGLFAQFILGKDEKETEDTKELKVVNKGRKHGKVA</sequence>
<proteinExistence type="inferred from homology"/>
<feature type="chain" id="PRO_1000164097" description="Antiholin-like protein LrgA">
    <location>
        <begin position="1"/>
        <end position="143"/>
    </location>
</feature>
<feature type="transmembrane region" description="Helical" evidence="1">
    <location>
        <begin position="6"/>
        <end position="26"/>
    </location>
</feature>
<feature type="transmembrane region" description="Helical" evidence="1">
    <location>
        <begin position="30"/>
        <end position="50"/>
    </location>
</feature>
<feature type="transmembrane region" description="Helical" evidence="1">
    <location>
        <begin position="61"/>
        <end position="81"/>
    </location>
</feature>
<feature type="transmembrane region" description="Helical" evidence="1">
    <location>
        <begin position="97"/>
        <end position="117"/>
    </location>
</feature>
<gene>
    <name evidence="1" type="primary">lrgA</name>
    <name type="ordered locus">BAMEG_5737</name>
</gene>
<keyword id="KW-1003">Cell membrane</keyword>
<keyword id="KW-0204">Cytolysis</keyword>
<keyword id="KW-0472">Membrane</keyword>
<keyword id="KW-0812">Transmembrane</keyword>
<keyword id="KW-1133">Transmembrane helix</keyword>
<comment type="function">
    <text evidence="1">Inhibits the expression or activity of extracellular murein hydrolases by interacting, possibly with LrgB, with the holin-like protein CidA. The LrgAB and CidA proteins may affect the proton motive force of the membrane. May be involved in programmed cell death (PCD), possibly triggering PCD in response to antibiotics and environmental stresses.</text>
</comment>
<comment type="subcellular location">
    <subcellularLocation>
        <location evidence="1">Cell membrane</location>
        <topology evidence="1">Multi-pass membrane protein</topology>
    </subcellularLocation>
</comment>
<comment type="similarity">
    <text evidence="1">Belongs to the CidA/LrgA family. LrgA subfamily.</text>
</comment>
<protein>
    <recommendedName>
        <fullName evidence="1">Antiholin-like protein LrgA</fullName>
    </recommendedName>
</protein>
<name>LRGA_BACAC</name>
<dbReference type="EMBL" id="CP001215">
    <property type="protein sequence ID" value="ACP17342.1"/>
    <property type="molecule type" value="Genomic_DNA"/>
</dbReference>
<dbReference type="RefSeq" id="WP_000104901.1">
    <property type="nucleotide sequence ID" value="NC_012581.1"/>
</dbReference>
<dbReference type="SMR" id="C3LGP8"/>
<dbReference type="GeneID" id="93005686"/>
<dbReference type="KEGG" id="bah:BAMEG_5737"/>
<dbReference type="HOGENOM" id="CLU_113736_0_1_9"/>
<dbReference type="GO" id="GO:0005886">
    <property type="term" value="C:plasma membrane"/>
    <property type="evidence" value="ECO:0007669"/>
    <property type="project" value="UniProtKB-SubCell"/>
</dbReference>
<dbReference type="GO" id="GO:0019835">
    <property type="term" value="P:cytolysis"/>
    <property type="evidence" value="ECO:0007669"/>
    <property type="project" value="UniProtKB-UniRule"/>
</dbReference>
<dbReference type="GO" id="GO:0031640">
    <property type="term" value="P:killing of cells of another organism"/>
    <property type="evidence" value="ECO:0007669"/>
    <property type="project" value="UniProtKB-KW"/>
</dbReference>
<dbReference type="GO" id="GO:0012501">
    <property type="term" value="P:programmed cell death"/>
    <property type="evidence" value="ECO:0007669"/>
    <property type="project" value="UniProtKB-UniRule"/>
</dbReference>
<dbReference type="HAMAP" id="MF_01141">
    <property type="entry name" value="LrgA"/>
    <property type="match status" value="1"/>
</dbReference>
<dbReference type="InterPro" id="IPR023736">
    <property type="entry name" value="Antiholin-like_LrgA"/>
</dbReference>
<dbReference type="InterPro" id="IPR005538">
    <property type="entry name" value="LrgA/CidA"/>
</dbReference>
<dbReference type="NCBIfam" id="NF003155">
    <property type="entry name" value="PRK04125.1"/>
    <property type="match status" value="1"/>
</dbReference>
<dbReference type="PANTHER" id="PTHR33931:SF4">
    <property type="entry name" value="ANTIHOLIN-LIKE PROTEIN LRGA"/>
    <property type="match status" value="1"/>
</dbReference>
<dbReference type="PANTHER" id="PTHR33931">
    <property type="entry name" value="HOLIN-LIKE PROTEIN CIDA-RELATED"/>
    <property type="match status" value="1"/>
</dbReference>
<dbReference type="Pfam" id="PF03788">
    <property type="entry name" value="LrgA"/>
    <property type="match status" value="1"/>
</dbReference>
<accession>C3LGP8</accession>
<evidence type="ECO:0000255" key="1">
    <source>
        <dbReference type="HAMAP-Rule" id="MF_01141"/>
    </source>
</evidence>
<organism>
    <name type="scientific">Bacillus anthracis (strain CDC 684 / NRRL 3495)</name>
    <dbReference type="NCBI Taxonomy" id="568206"/>
    <lineage>
        <taxon>Bacteria</taxon>
        <taxon>Bacillati</taxon>
        <taxon>Bacillota</taxon>
        <taxon>Bacilli</taxon>
        <taxon>Bacillales</taxon>
        <taxon>Bacillaceae</taxon>
        <taxon>Bacillus</taxon>
        <taxon>Bacillus cereus group</taxon>
    </lineage>
</organism>
<reference key="1">
    <citation type="submission" date="2008-10" db="EMBL/GenBank/DDBJ databases">
        <title>Genome sequence of Bacillus anthracis str. CDC 684.</title>
        <authorList>
            <person name="Dodson R.J."/>
            <person name="Munk A.C."/>
            <person name="Brettin T."/>
            <person name="Bruce D."/>
            <person name="Detter C."/>
            <person name="Tapia R."/>
            <person name="Han C."/>
            <person name="Sutton G."/>
            <person name="Sims D."/>
        </authorList>
    </citation>
    <scope>NUCLEOTIDE SEQUENCE [LARGE SCALE GENOMIC DNA]</scope>
    <source>
        <strain>CDC 684 / NRRL 3495</strain>
    </source>
</reference>